<comment type="function">
    <text evidence="3 4 5">Acts as a negative regulator of seedling photomorphogenesis (PubMed:18540109). Acts as a negative regulator of blue light-mediated inhibition of hypocotyl elongation through increase of bioactive gibberellin levels (PubMed:20872270). Acts as a repressor of thermotolerance by modulating expression of a set of heat shock-responsive genes (PubMed:23238922).</text>
</comment>
<comment type="interaction">
    <interactant intactId="EBI-15192077">
        <id>Q9SJU5</id>
    </interactant>
    <interactant intactId="EBI-7920168">
        <id>Q8L500</id>
        <label>APRR9</label>
    </interactant>
    <organismsDiffer>false</organismsDiffer>
    <experiments>3</experiments>
</comment>
<comment type="interaction">
    <interactant intactId="EBI-15192077">
        <id>Q9SJU5</id>
    </interactant>
    <interactant intactId="EBI-15192193">
        <id>C0SV91</id>
        <label>At2g46670</label>
    </interactant>
    <organismsDiffer>false</organismsDiffer>
    <experiments>3</experiments>
</comment>
<comment type="interaction">
    <interactant intactId="EBI-15192077">
        <id>Q9SJU5</id>
    </interactant>
    <interactant intactId="EBI-15192033">
        <id>O22800-2</id>
        <label>COL14</label>
    </interactant>
    <organismsDiffer>false</organismsDiffer>
    <experiments>3</experiments>
</comment>
<comment type="subcellular location">
    <subcellularLocation>
        <location evidence="4">Nucleus</location>
    </subcellularLocation>
</comment>
<comment type="tissue specificity">
    <text evidence="4">Expressed in vasculature of leaves and petioles.</text>
</comment>
<comment type="induction">
    <text evidence="4 5">By blue light (PubMed:20872270) and heat shock (at protein level) (PubMed:23238922).</text>
</comment>
<dbReference type="EMBL" id="AC006841">
    <property type="protein sequence ID" value="AAD23680.2"/>
    <property type="molecule type" value="Genomic_DNA"/>
</dbReference>
<dbReference type="EMBL" id="CP002685">
    <property type="protein sequence ID" value="AEC07159.1"/>
    <property type="molecule type" value="Genomic_DNA"/>
</dbReference>
<dbReference type="EMBL" id="AY060570">
    <property type="protein sequence ID" value="AAL31199.1"/>
    <property type="molecule type" value="mRNA"/>
</dbReference>
<dbReference type="EMBL" id="AY125573">
    <property type="protein sequence ID" value="AAM78083.1"/>
    <property type="molecule type" value="mRNA"/>
</dbReference>
<dbReference type="PIR" id="H84599">
    <property type="entry name" value="H84599"/>
</dbReference>
<dbReference type="RefSeq" id="NP_565507.1">
    <property type="nucleotide sequence ID" value="NM_127704.3"/>
</dbReference>
<dbReference type="SMR" id="Q9SJU5"/>
<dbReference type="BioGRID" id="2024">
    <property type="interactions" value="14"/>
</dbReference>
<dbReference type="FunCoup" id="Q9SJU5">
    <property type="interactions" value="106"/>
</dbReference>
<dbReference type="IntAct" id="Q9SJU5">
    <property type="interactions" value="13"/>
</dbReference>
<dbReference type="STRING" id="3702.Q9SJU5"/>
<dbReference type="PaxDb" id="3702-AT2G21320.1"/>
<dbReference type="ProteomicsDB" id="240852"/>
<dbReference type="EnsemblPlants" id="AT2G21320.1">
    <property type="protein sequence ID" value="AT2G21320.1"/>
    <property type="gene ID" value="AT2G21320"/>
</dbReference>
<dbReference type="GeneID" id="816671"/>
<dbReference type="Gramene" id="AT2G21320.1">
    <property type="protein sequence ID" value="AT2G21320.1"/>
    <property type="gene ID" value="AT2G21320"/>
</dbReference>
<dbReference type="KEGG" id="ath:AT2G21320"/>
<dbReference type="Araport" id="AT2G21320"/>
<dbReference type="TAIR" id="AT2G21320">
    <property type="gene designation" value="BBX18"/>
</dbReference>
<dbReference type="eggNOG" id="ENOG502QZEK">
    <property type="taxonomic scope" value="Eukaryota"/>
</dbReference>
<dbReference type="HOGENOM" id="CLU_113487_0_0_1"/>
<dbReference type="InParanoid" id="Q9SJU5"/>
<dbReference type="OMA" id="HDHNMID"/>
<dbReference type="OrthoDB" id="153872at2759"/>
<dbReference type="PhylomeDB" id="Q9SJU5"/>
<dbReference type="PRO" id="PR:Q9SJU5"/>
<dbReference type="Proteomes" id="UP000006548">
    <property type="component" value="Chromosome 2"/>
</dbReference>
<dbReference type="ExpressionAtlas" id="Q9SJU5">
    <property type="expression patterns" value="baseline and differential"/>
</dbReference>
<dbReference type="GO" id="GO:0005634">
    <property type="term" value="C:nucleus"/>
    <property type="evidence" value="ECO:0000314"/>
    <property type="project" value="UniProtKB"/>
</dbReference>
<dbReference type="GO" id="GO:0003700">
    <property type="term" value="F:DNA-binding transcription factor activity"/>
    <property type="evidence" value="ECO:0000250"/>
    <property type="project" value="TAIR"/>
</dbReference>
<dbReference type="GO" id="GO:0000976">
    <property type="term" value="F:transcription cis-regulatory region binding"/>
    <property type="evidence" value="ECO:0000353"/>
    <property type="project" value="TAIR"/>
</dbReference>
<dbReference type="GO" id="GO:0008270">
    <property type="term" value="F:zinc ion binding"/>
    <property type="evidence" value="ECO:0007669"/>
    <property type="project" value="UniProtKB-KW"/>
</dbReference>
<dbReference type="GO" id="GO:0070370">
    <property type="term" value="P:cellular heat acclimation"/>
    <property type="evidence" value="ECO:0000315"/>
    <property type="project" value="UniProtKB"/>
</dbReference>
<dbReference type="GO" id="GO:0071483">
    <property type="term" value="P:cellular response to blue light"/>
    <property type="evidence" value="ECO:0000314"/>
    <property type="project" value="UniProtKB"/>
</dbReference>
<dbReference type="GO" id="GO:0010100">
    <property type="term" value="P:negative regulation of photomorphogenesis"/>
    <property type="evidence" value="ECO:0000314"/>
    <property type="project" value="UniProtKB"/>
</dbReference>
<dbReference type="GO" id="GO:0006355">
    <property type="term" value="P:regulation of DNA-templated transcription"/>
    <property type="evidence" value="ECO:0000304"/>
    <property type="project" value="TAIR"/>
</dbReference>
<dbReference type="CDD" id="cd19821">
    <property type="entry name" value="Bbox1_BBX-like"/>
    <property type="match status" value="1"/>
</dbReference>
<dbReference type="FunFam" id="3.30.160.60:FF:000610">
    <property type="entry name" value="B-box zinc finger protein 19"/>
    <property type="match status" value="1"/>
</dbReference>
<dbReference type="Gene3D" id="3.30.160.60">
    <property type="entry name" value="Classic Zinc Finger"/>
    <property type="match status" value="1"/>
</dbReference>
<dbReference type="InterPro" id="IPR051979">
    <property type="entry name" value="B-box_zinc_finger"/>
</dbReference>
<dbReference type="InterPro" id="IPR049808">
    <property type="entry name" value="CONSTANS-like_Bbox1"/>
</dbReference>
<dbReference type="InterPro" id="IPR000315">
    <property type="entry name" value="Znf_B-box"/>
</dbReference>
<dbReference type="PANTHER" id="PTHR31832:SF36">
    <property type="entry name" value="B-BOX ZINC FINGER PROTEIN 18"/>
    <property type="match status" value="1"/>
</dbReference>
<dbReference type="PANTHER" id="PTHR31832">
    <property type="entry name" value="B-BOX ZINC FINGER PROTEIN 22"/>
    <property type="match status" value="1"/>
</dbReference>
<dbReference type="Pfam" id="PF00643">
    <property type="entry name" value="zf-B_box"/>
    <property type="match status" value="1"/>
</dbReference>
<dbReference type="SMART" id="SM00336">
    <property type="entry name" value="BBOX"/>
    <property type="match status" value="2"/>
</dbReference>
<dbReference type="PROSITE" id="PS50119">
    <property type="entry name" value="ZF_BBOX"/>
    <property type="match status" value="2"/>
</dbReference>
<feature type="chain" id="PRO_0000430585" description="B-box zinc finger protein 18">
    <location>
        <begin position="1"/>
        <end position="172"/>
    </location>
</feature>
<feature type="zinc finger region" description="B box-type 1; atypical" evidence="1">
    <location>
        <begin position="5"/>
        <end position="47"/>
    </location>
</feature>
<feature type="zinc finger region" description="B box-type 2; atypical" evidence="1">
    <location>
        <begin position="56"/>
        <end position="96"/>
    </location>
</feature>
<feature type="region of interest" description="Disordered" evidence="2">
    <location>
        <begin position="119"/>
        <end position="172"/>
    </location>
</feature>
<feature type="compositionally biased region" description="Polar residues" evidence="2">
    <location>
        <begin position="120"/>
        <end position="132"/>
    </location>
</feature>
<feature type="compositionally biased region" description="Basic and acidic residues" evidence="2">
    <location>
        <begin position="148"/>
        <end position="158"/>
    </location>
</feature>
<feature type="binding site" evidence="1">
    <location>
        <position position="5"/>
    </location>
    <ligand>
        <name>Zn(2+)</name>
        <dbReference type="ChEBI" id="CHEBI:29105"/>
        <label>1</label>
    </ligand>
</feature>
<feature type="binding site" evidence="1">
    <location>
        <position position="8"/>
    </location>
    <ligand>
        <name>Zn(2+)</name>
        <dbReference type="ChEBI" id="CHEBI:29105"/>
        <label>1</label>
    </ligand>
</feature>
<feature type="binding site" evidence="1">
    <location>
        <position position="28"/>
    </location>
    <ligand>
        <name>Zn(2+)</name>
        <dbReference type="ChEBI" id="CHEBI:29105"/>
        <label>1</label>
    </ligand>
</feature>
<feature type="binding site" evidence="1">
    <location>
        <position position="33"/>
    </location>
    <ligand>
        <name>Zn(2+)</name>
        <dbReference type="ChEBI" id="CHEBI:29105"/>
        <label>1</label>
    </ligand>
</feature>
<feature type="binding site" evidence="1">
    <location>
        <position position="56"/>
    </location>
    <ligand>
        <name>Zn(2+)</name>
        <dbReference type="ChEBI" id="CHEBI:29105"/>
        <label>2</label>
    </ligand>
</feature>
<feature type="binding site" evidence="1">
    <location>
        <position position="59"/>
    </location>
    <ligand>
        <name>Zn(2+)</name>
        <dbReference type="ChEBI" id="CHEBI:29105"/>
        <label>2</label>
    </ligand>
</feature>
<feature type="binding site" evidence="1">
    <location>
        <position position="79"/>
    </location>
    <ligand>
        <name>Zn(2+)</name>
        <dbReference type="ChEBI" id="CHEBI:29105"/>
        <label>2</label>
    </ligand>
</feature>
<feature type="binding site" evidence="1">
    <location>
        <position position="84"/>
    </location>
    <ligand>
        <name>Zn(2+)</name>
        <dbReference type="ChEBI" id="CHEBI:29105"/>
        <label>2</label>
    </ligand>
</feature>
<proteinExistence type="evidence at protein level"/>
<keyword id="KW-0479">Metal-binding</keyword>
<keyword id="KW-0539">Nucleus</keyword>
<keyword id="KW-1185">Reference proteome</keyword>
<keyword id="KW-0677">Repeat</keyword>
<keyword id="KW-0678">Repressor</keyword>
<keyword id="KW-0804">Transcription</keyword>
<keyword id="KW-0805">Transcription regulation</keyword>
<keyword id="KW-0862">Zinc</keyword>
<keyword id="KW-0863">Zinc-finger</keyword>
<protein>
    <recommendedName>
        <fullName evidence="6">B-box zinc finger protein 18</fullName>
    </recommendedName>
    <alternativeName>
        <fullName evidence="7">Protein DOUBLE B-BOX 1A</fullName>
    </alternativeName>
    <alternativeName>
        <fullName>Protein SALT TOLERANCE HOMOLOG 4</fullName>
    </alternativeName>
</protein>
<sequence>MRILCDACESAAAIVFCAADEAALCCSCDEKVHKCNKLASRHLRVGLADPSNAPSCDICENAPAFFYCEIDGSSLCLQCDMVVHVGGKRTHRRFLLLRQRIEFPGDKPNHADQLGLRCQKASSGRGQESNGNGDHDHNMIDLNSNPQRVHEPGSHNQEEGIDVNNANNHEHE</sequence>
<organism>
    <name type="scientific">Arabidopsis thaliana</name>
    <name type="common">Mouse-ear cress</name>
    <dbReference type="NCBI Taxonomy" id="3702"/>
    <lineage>
        <taxon>Eukaryota</taxon>
        <taxon>Viridiplantae</taxon>
        <taxon>Streptophyta</taxon>
        <taxon>Embryophyta</taxon>
        <taxon>Tracheophyta</taxon>
        <taxon>Spermatophyta</taxon>
        <taxon>Magnoliopsida</taxon>
        <taxon>eudicotyledons</taxon>
        <taxon>Gunneridae</taxon>
        <taxon>Pentapetalae</taxon>
        <taxon>rosids</taxon>
        <taxon>malvids</taxon>
        <taxon>Brassicales</taxon>
        <taxon>Brassicaceae</taxon>
        <taxon>Camelineae</taxon>
        <taxon>Arabidopsis</taxon>
    </lineage>
</organism>
<gene>
    <name evidence="6" type="primary">BBX18</name>
    <name evidence="7" type="synonym">DBB1A</name>
    <name type="synonym">STH4</name>
    <name evidence="8" type="ordered locus">At2g21320</name>
    <name type="ORF">F3K23.8</name>
</gene>
<reference key="1">
    <citation type="journal article" date="1999" name="Nature">
        <title>Sequence and analysis of chromosome 2 of the plant Arabidopsis thaliana.</title>
        <authorList>
            <person name="Lin X."/>
            <person name="Kaul S."/>
            <person name="Rounsley S.D."/>
            <person name="Shea T.P."/>
            <person name="Benito M.-I."/>
            <person name="Town C.D."/>
            <person name="Fujii C.Y."/>
            <person name="Mason T.M."/>
            <person name="Bowman C.L."/>
            <person name="Barnstead M.E."/>
            <person name="Feldblyum T.V."/>
            <person name="Buell C.R."/>
            <person name="Ketchum K.A."/>
            <person name="Lee J.J."/>
            <person name="Ronning C.M."/>
            <person name="Koo H.L."/>
            <person name="Moffat K.S."/>
            <person name="Cronin L.A."/>
            <person name="Shen M."/>
            <person name="Pai G."/>
            <person name="Van Aken S."/>
            <person name="Umayam L."/>
            <person name="Tallon L.J."/>
            <person name="Gill J.E."/>
            <person name="Adams M.D."/>
            <person name="Carrera A.J."/>
            <person name="Creasy T.H."/>
            <person name="Goodman H.M."/>
            <person name="Somerville C.R."/>
            <person name="Copenhaver G.P."/>
            <person name="Preuss D."/>
            <person name="Nierman W.C."/>
            <person name="White O."/>
            <person name="Eisen J.A."/>
            <person name="Salzberg S.L."/>
            <person name="Fraser C.M."/>
            <person name="Venter J.C."/>
        </authorList>
    </citation>
    <scope>NUCLEOTIDE SEQUENCE [LARGE SCALE GENOMIC DNA]</scope>
    <source>
        <strain>cv. Columbia</strain>
    </source>
</reference>
<reference key="2">
    <citation type="journal article" date="2017" name="Plant J.">
        <title>Araport11: a complete reannotation of the Arabidopsis thaliana reference genome.</title>
        <authorList>
            <person name="Cheng C.Y."/>
            <person name="Krishnakumar V."/>
            <person name="Chan A.P."/>
            <person name="Thibaud-Nissen F."/>
            <person name="Schobel S."/>
            <person name="Town C.D."/>
        </authorList>
    </citation>
    <scope>GENOME REANNOTATION</scope>
    <source>
        <strain>cv. Columbia</strain>
    </source>
</reference>
<reference key="3">
    <citation type="journal article" date="2003" name="Science">
        <title>Empirical analysis of transcriptional activity in the Arabidopsis genome.</title>
        <authorList>
            <person name="Yamada K."/>
            <person name="Lim J."/>
            <person name="Dale J.M."/>
            <person name="Chen H."/>
            <person name="Shinn P."/>
            <person name="Palm C.J."/>
            <person name="Southwick A.M."/>
            <person name="Wu H.C."/>
            <person name="Kim C.J."/>
            <person name="Nguyen M."/>
            <person name="Pham P.K."/>
            <person name="Cheuk R.F."/>
            <person name="Karlin-Newmann G."/>
            <person name="Liu S.X."/>
            <person name="Lam B."/>
            <person name="Sakano H."/>
            <person name="Wu T."/>
            <person name="Yu G."/>
            <person name="Miranda M."/>
            <person name="Quach H.L."/>
            <person name="Tripp M."/>
            <person name="Chang C.H."/>
            <person name="Lee J.M."/>
            <person name="Toriumi M.J."/>
            <person name="Chan M.M."/>
            <person name="Tang C.C."/>
            <person name="Onodera C.S."/>
            <person name="Deng J.M."/>
            <person name="Akiyama K."/>
            <person name="Ansari Y."/>
            <person name="Arakawa T."/>
            <person name="Banh J."/>
            <person name="Banno F."/>
            <person name="Bowser L."/>
            <person name="Brooks S.Y."/>
            <person name="Carninci P."/>
            <person name="Chao Q."/>
            <person name="Choy N."/>
            <person name="Enju A."/>
            <person name="Goldsmith A.D."/>
            <person name="Gurjal M."/>
            <person name="Hansen N.F."/>
            <person name="Hayashizaki Y."/>
            <person name="Johnson-Hopson C."/>
            <person name="Hsuan V.W."/>
            <person name="Iida K."/>
            <person name="Karnes M."/>
            <person name="Khan S."/>
            <person name="Koesema E."/>
            <person name="Ishida J."/>
            <person name="Jiang P.X."/>
            <person name="Jones T."/>
            <person name="Kawai J."/>
            <person name="Kamiya A."/>
            <person name="Meyers C."/>
            <person name="Nakajima M."/>
            <person name="Narusaka M."/>
            <person name="Seki M."/>
            <person name="Sakurai T."/>
            <person name="Satou M."/>
            <person name="Tamse R."/>
            <person name="Vaysberg M."/>
            <person name="Wallender E.K."/>
            <person name="Wong C."/>
            <person name="Yamamura Y."/>
            <person name="Yuan S."/>
            <person name="Shinozaki K."/>
            <person name="Davis R.W."/>
            <person name="Theologis A."/>
            <person name="Ecker J.R."/>
        </authorList>
    </citation>
    <scope>NUCLEOTIDE SEQUENCE [LARGE SCALE MRNA]</scope>
    <source>
        <strain>cv. Columbia</strain>
    </source>
</reference>
<reference key="4">
    <citation type="journal article" date="2008" name="Biosci. Biotechnol. Biochem.">
        <title>The common function of a novel subfamily of B-Box zinc finger proteins with reference to circadian-associated events in Arabidopsis thaliana.</title>
        <authorList>
            <person name="Kumagai T."/>
            <person name="Ito S."/>
            <person name="Nakamichi N."/>
            <person name="Niwa Y."/>
            <person name="Murakami M."/>
            <person name="Yamashino T."/>
            <person name="Mizuno T."/>
        </authorList>
    </citation>
    <scope>FUNCTION</scope>
</reference>
<reference key="5">
    <citation type="journal article" date="2009" name="Plant Cell">
        <title>The Arabidopsis B-box zinc finger family.</title>
        <authorList>
            <person name="Khanna R."/>
            <person name="Kronmiller B."/>
            <person name="Maszle D.R."/>
            <person name="Coupland G."/>
            <person name="Holm M."/>
            <person name="Mizuno T."/>
            <person name="Wu S.H."/>
        </authorList>
    </citation>
    <scope>GENE FAMILY</scope>
    <scope>NOMENCLATURE</scope>
</reference>
<reference key="6">
    <citation type="journal article" date="2011" name="Planta">
        <title>DBB1a, involved in gibberellin homeostasis, functions as a negative regulator of blue light-mediated hypocotyl elongation in Arabidopsis.</title>
        <authorList>
            <person name="Wang Q."/>
            <person name="Zeng J."/>
            <person name="Deng K."/>
            <person name="Tu X."/>
            <person name="Zhao X."/>
            <person name="Tang D."/>
            <person name="Liu X."/>
        </authorList>
    </citation>
    <scope>FUNCTION</scope>
    <scope>SUBCELLULAR LOCATION</scope>
    <scope>TISSUE SPECIFICITY</scope>
    <scope>INDUCTION BY BLUE LIGHT</scope>
</reference>
<reference key="7">
    <citation type="journal article" date="2013" name="Mol. Biol. Rep.">
        <title>Heat stress-induced BBX18 negatively regulates the thermotolerance in Arabidopsis.</title>
        <authorList>
            <person name="Wang Q."/>
            <person name="Tu X."/>
            <person name="Zhang J."/>
            <person name="Chen X."/>
            <person name="Rao L."/>
        </authorList>
    </citation>
    <scope>FUNCTION</scope>
    <scope>INDUCTION BY HEAT SHOCK</scope>
</reference>
<name>BBX18_ARATH</name>
<accession>Q9SJU5</accession>
<accession>Q8W4S1</accession>
<evidence type="ECO:0000255" key="1">
    <source>
        <dbReference type="PROSITE-ProRule" id="PRU00024"/>
    </source>
</evidence>
<evidence type="ECO:0000256" key="2">
    <source>
        <dbReference type="SAM" id="MobiDB-lite"/>
    </source>
</evidence>
<evidence type="ECO:0000269" key="3">
    <source>
    </source>
</evidence>
<evidence type="ECO:0000269" key="4">
    <source>
    </source>
</evidence>
<evidence type="ECO:0000269" key="5">
    <source>
    </source>
</evidence>
<evidence type="ECO:0000303" key="6">
    <source>
    </source>
</evidence>
<evidence type="ECO:0000303" key="7">
    <source>
    </source>
</evidence>
<evidence type="ECO:0000312" key="8">
    <source>
        <dbReference type="Araport" id="AT2G21320"/>
    </source>
</evidence>